<name>GSA_AQUAE</name>
<evidence type="ECO:0000250" key="1"/>
<evidence type="ECO:0000305" key="2"/>
<reference key="1">
    <citation type="journal article" date="1998" name="Nature">
        <title>The complete genome of the hyperthermophilic bacterium Aquifex aeolicus.</title>
        <authorList>
            <person name="Deckert G."/>
            <person name="Warren P.V."/>
            <person name="Gaasterland T."/>
            <person name="Young W.G."/>
            <person name="Lenox A.L."/>
            <person name="Graham D.E."/>
            <person name="Overbeek R."/>
            <person name="Snead M.A."/>
            <person name="Keller M."/>
            <person name="Aujay M."/>
            <person name="Huber R."/>
            <person name="Feldman R.A."/>
            <person name="Short J.M."/>
            <person name="Olsen G.J."/>
            <person name="Swanson R.V."/>
        </authorList>
    </citation>
    <scope>NUCLEOTIDE SEQUENCE [LARGE SCALE GENOMIC DNA]</scope>
    <source>
        <strain>VF5</strain>
    </source>
</reference>
<protein>
    <recommendedName>
        <fullName>Glutamate-1-semialdehyde 2,1-aminomutase</fullName>
        <shortName>GSA</shortName>
        <ecNumber>5.4.3.8</ecNumber>
    </recommendedName>
    <alternativeName>
        <fullName>Glutamate-1-semialdehyde aminotransferase</fullName>
        <shortName>GSA-AT</shortName>
    </alternativeName>
</protein>
<accession>O66998</accession>
<keyword id="KW-0963">Cytoplasm</keyword>
<keyword id="KW-0413">Isomerase</keyword>
<keyword id="KW-0627">Porphyrin biosynthesis</keyword>
<keyword id="KW-0663">Pyridoxal phosphate</keyword>
<keyword id="KW-1185">Reference proteome</keyword>
<comment type="catalytic activity">
    <reaction>
        <text>(S)-4-amino-5-oxopentanoate = 5-aminolevulinate</text>
        <dbReference type="Rhea" id="RHEA:14265"/>
        <dbReference type="ChEBI" id="CHEBI:57501"/>
        <dbReference type="ChEBI" id="CHEBI:356416"/>
        <dbReference type="EC" id="5.4.3.8"/>
    </reaction>
</comment>
<comment type="cofactor">
    <cofactor evidence="1">
        <name>pyridoxal 5'-phosphate</name>
        <dbReference type="ChEBI" id="CHEBI:597326"/>
    </cofactor>
</comment>
<comment type="pathway">
    <text>Porphyrin-containing compound metabolism; protoporphyrin-IX biosynthesis; 5-aminolevulinate from L-glutamyl-tRNA(Glu): step 2/2.</text>
</comment>
<comment type="subunit">
    <text evidence="1">Homodimer.</text>
</comment>
<comment type="subcellular location">
    <subcellularLocation>
        <location evidence="2">Cytoplasm</location>
    </subcellularLocation>
</comment>
<comment type="similarity">
    <text evidence="2">Belongs to the class-III pyridoxal-phosphate-dependent aminotransferase family. HemL subfamily.</text>
</comment>
<proteinExistence type="inferred from homology"/>
<feature type="chain" id="PRO_0000120391" description="Glutamate-1-semialdehyde 2,1-aminomutase">
    <location>
        <begin position="1"/>
        <end position="424"/>
    </location>
</feature>
<feature type="modified residue" description="N6-(pyridoxal phosphate)lysine" evidence="1">
    <location>
        <position position="264"/>
    </location>
</feature>
<organism>
    <name type="scientific">Aquifex aeolicus (strain VF5)</name>
    <dbReference type="NCBI Taxonomy" id="224324"/>
    <lineage>
        <taxon>Bacteria</taxon>
        <taxon>Pseudomonadati</taxon>
        <taxon>Aquificota</taxon>
        <taxon>Aquificia</taxon>
        <taxon>Aquificales</taxon>
        <taxon>Aquificaceae</taxon>
        <taxon>Aquifex</taxon>
    </lineage>
</organism>
<sequence length="424" mass="46394">MKNEKLYREALQVMPGGVNSPVRAFKAVGGKPIFLVKGRGPRVWDAEGNEYIDFLASWGAIILGHAPKKVVKAVQEEAEKGLSFGLTNPHEVTLAKLVVEMVPSVEKVRFVNSGTEATMSAVRLARGVTGRKYIVKFEGCYHGHYDSLLVSAGSGVATFGIPGTPGIPEEIAKLTIVLPYNDVQALEEAFKEYGSEIAGVIVEPIAGNMGVVPPKKEFLIRLRELTKEYGSLLMFDEVITGFRLSKGGAQELFGIEPDITCLGKILGGGLPVGAYGGRREIMERVAPEGEVYQAGTLAGNPLAMVSGSETLKDLRDKEPYKELEEKMEKLARGVKDILTEKGIQHTINKVGSMMTVFFTDKKVVDFQTAKTSDTELFAKFFRALLNKGVLIPPSQFEAWFLTTAHEEEVIDEALERIRDAVKEL</sequence>
<gene>
    <name type="primary">hemL</name>
    <name type="synonym">gsa</name>
    <name type="ordered locus">aq_816</name>
</gene>
<dbReference type="EC" id="5.4.3.8"/>
<dbReference type="EMBL" id="AE000657">
    <property type="protein sequence ID" value="AAC06964.1"/>
    <property type="molecule type" value="Genomic_DNA"/>
</dbReference>
<dbReference type="PIR" id="C70371">
    <property type="entry name" value="C70371"/>
</dbReference>
<dbReference type="RefSeq" id="NP_213559.1">
    <property type="nucleotide sequence ID" value="NC_000918.1"/>
</dbReference>
<dbReference type="RefSeq" id="WP_010880497.1">
    <property type="nucleotide sequence ID" value="NC_000918.1"/>
</dbReference>
<dbReference type="SMR" id="O66998"/>
<dbReference type="FunCoup" id="O66998">
    <property type="interactions" value="491"/>
</dbReference>
<dbReference type="STRING" id="224324.aq_816"/>
<dbReference type="EnsemblBacteria" id="AAC06964">
    <property type="protein sequence ID" value="AAC06964"/>
    <property type="gene ID" value="aq_816"/>
</dbReference>
<dbReference type="KEGG" id="aae:aq_816"/>
<dbReference type="PATRIC" id="fig|224324.8.peg.644"/>
<dbReference type="eggNOG" id="COG0001">
    <property type="taxonomic scope" value="Bacteria"/>
</dbReference>
<dbReference type="HOGENOM" id="CLU_016922_1_5_0"/>
<dbReference type="InParanoid" id="O66998"/>
<dbReference type="OrthoDB" id="9807885at2"/>
<dbReference type="UniPathway" id="UPA00251">
    <property type="reaction ID" value="UER00317"/>
</dbReference>
<dbReference type="Proteomes" id="UP000000798">
    <property type="component" value="Chromosome"/>
</dbReference>
<dbReference type="GO" id="GO:0005737">
    <property type="term" value="C:cytoplasm"/>
    <property type="evidence" value="ECO:0007669"/>
    <property type="project" value="UniProtKB-SubCell"/>
</dbReference>
<dbReference type="GO" id="GO:0042286">
    <property type="term" value="F:glutamate-1-semialdehyde 2,1-aminomutase activity"/>
    <property type="evidence" value="ECO:0007669"/>
    <property type="project" value="UniProtKB-UniRule"/>
</dbReference>
<dbReference type="GO" id="GO:0030170">
    <property type="term" value="F:pyridoxal phosphate binding"/>
    <property type="evidence" value="ECO:0007669"/>
    <property type="project" value="InterPro"/>
</dbReference>
<dbReference type="GO" id="GO:0008483">
    <property type="term" value="F:transaminase activity"/>
    <property type="evidence" value="ECO:0007669"/>
    <property type="project" value="InterPro"/>
</dbReference>
<dbReference type="GO" id="GO:0006782">
    <property type="term" value="P:protoporphyrinogen IX biosynthetic process"/>
    <property type="evidence" value="ECO:0007669"/>
    <property type="project" value="UniProtKB-UniRule"/>
</dbReference>
<dbReference type="CDD" id="cd00610">
    <property type="entry name" value="OAT_like"/>
    <property type="match status" value="1"/>
</dbReference>
<dbReference type="FunFam" id="3.40.640.10:FF:000021">
    <property type="entry name" value="Glutamate-1-semialdehyde 2,1-aminomutase"/>
    <property type="match status" value="1"/>
</dbReference>
<dbReference type="Gene3D" id="3.90.1150.10">
    <property type="entry name" value="Aspartate Aminotransferase, domain 1"/>
    <property type="match status" value="1"/>
</dbReference>
<dbReference type="Gene3D" id="3.40.640.10">
    <property type="entry name" value="Type I PLP-dependent aspartate aminotransferase-like (Major domain)"/>
    <property type="match status" value="1"/>
</dbReference>
<dbReference type="HAMAP" id="MF_00375">
    <property type="entry name" value="HemL_aminotrans_3"/>
    <property type="match status" value="1"/>
</dbReference>
<dbReference type="InterPro" id="IPR004639">
    <property type="entry name" value="4pyrrol_synth_GluAld_NH2Trfase"/>
</dbReference>
<dbReference type="InterPro" id="IPR005814">
    <property type="entry name" value="Aminotrans_3"/>
</dbReference>
<dbReference type="InterPro" id="IPR049704">
    <property type="entry name" value="Aminotrans_3_PPA_site"/>
</dbReference>
<dbReference type="InterPro" id="IPR015424">
    <property type="entry name" value="PyrdxlP-dep_Trfase"/>
</dbReference>
<dbReference type="InterPro" id="IPR015421">
    <property type="entry name" value="PyrdxlP-dep_Trfase_major"/>
</dbReference>
<dbReference type="InterPro" id="IPR015422">
    <property type="entry name" value="PyrdxlP-dep_Trfase_small"/>
</dbReference>
<dbReference type="NCBIfam" id="TIGR00713">
    <property type="entry name" value="hemL"/>
    <property type="match status" value="1"/>
</dbReference>
<dbReference type="NCBIfam" id="NF000818">
    <property type="entry name" value="PRK00062.1"/>
    <property type="match status" value="1"/>
</dbReference>
<dbReference type="PANTHER" id="PTHR43713">
    <property type="entry name" value="GLUTAMATE-1-SEMIALDEHYDE 2,1-AMINOMUTASE"/>
    <property type="match status" value="1"/>
</dbReference>
<dbReference type="PANTHER" id="PTHR43713:SF3">
    <property type="entry name" value="GLUTAMATE-1-SEMIALDEHYDE 2,1-AMINOMUTASE 1, CHLOROPLASTIC-RELATED"/>
    <property type="match status" value="1"/>
</dbReference>
<dbReference type="Pfam" id="PF00202">
    <property type="entry name" value="Aminotran_3"/>
    <property type="match status" value="1"/>
</dbReference>
<dbReference type="SUPFAM" id="SSF53383">
    <property type="entry name" value="PLP-dependent transferases"/>
    <property type="match status" value="1"/>
</dbReference>
<dbReference type="PROSITE" id="PS00600">
    <property type="entry name" value="AA_TRANSFER_CLASS_3"/>
    <property type="match status" value="1"/>
</dbReference>